<organism>
    <name type="scientific">Salmonella dublin (strain CT_02021853)</name>
    <dbReference type="NCBI Taxonomy" id="439851"/>
    <lineage>
        <taxon>Bacteria</taxon>
        <taxon>Pseudomonadati</taxon>
        <taxon>Pseudomonadota</taxon>
        <taxon>Gammaproteobacteria</taxon>
        <taxon>Enterobacterales</taxon>
        <taxon>Enterobacteriaceae</taxon>
        <taxon>Salmonella</taxon>
    </lineage>
</organism>
<accession>B5FHU3</accession>
<reference key="1">
    <citation type="journal article" date="2011" name="J. Bacteriol.">
        <title>Comparative genomics of 28 Salmonella enterica isolates: evidence for CRISPR-mediated adaptive sublineage evolution.</title>
        <authorList>
            <person name="Fricke W.F."/>
            <person name="Mammel M.K."/>
            <person name="McDermott P.F."/>
            <person name="Tartera C."/>
            <person name="White D.G."/>
            <person name="Leclerc J.E."/>
            <person name="Ravel J."/>
            <person name="Cebula T.A."/>
        </authorList>
    </citation>
    <scope>NUCLEOTIDE SEQUENCE [LARGE SCALE GENOMIC DNA]</scope>
    <source>
        <strain>CT_02021853</strain>
    </source>
</reference>
<feature type="chain" id="PRO_1000146015" description="tRNA N6-adenosine threonylcarbamoyltransferase">
    <location>
        <begin position="1"/>
        <end position="337"/>
    </location>
</feature>
<feature type="binding site" evidence="1">
    <location>
        <position position="111"/>
    </location>
    <ligand>
        <name>Fe cation</name>
        <dbReference type="ChEBI" id="CHEBI:24875"/>
    </ligand>
</feature>
<feature type="binding site" evidence="1">
    <location>
        <position position="115"/>
    </location>
    <ligand>
        <name>Fe cation</name>
        <dbReference type="ChEBI" id="CHEBI:24875"/>
    </ligand>
</feature>
<feature type="binding site" evidence="1">
    <location>
        <begin position="134"/>
        <end position="138"/>
    </location>
    <ligand>
        <name>substrate</name>
    </ligand>
</feature>
<feature type="binding site" evidence="1">
    <location>
        <position position="167"/>
    </location>
    <ligand>
        <name>substrate</name>
    </ligand>
</feature>
<feature type="binding site" evidence="1">
    <location>
        <position position="180"/>
    </location>
    <ligand>
        <name>substrate</name>
    </ligand>
</feature>
<feature type="binding site" evidence="1">
    <location>
        <position position="272"/>
    </location>
    <ligand>
        <name>substrate</name>
    </ligand>
</feature>
<feature type="binding site" evidence="1">
    <location>
        <position position="300"/>
    </location>
    <ligand>
        <name>Fe cation</name>
        <dbReference type="ChEBI" id="CHEBI:24875"/>
    </ligand>
</feature>
<comment type="function">
    <text evidence="1">Required for the formation of a threonylcarbamoyl group on adenosine at position 37 (t(6)A37) in tRNAs that read codons beginning with adenine. Is involved in the transfer of the threonylcarbamoyl moiety of threonylcarbamoyl-AMP (TC-AMP) to the N6 group of A37, together with TsaE and TsaB. TsaD likely plays a direct catalytic role in this reaction.</text>
</comment>
<comment type="catalytic activity">
    <reaction evidence="1">
        <text>L-threonylcarbamoyladenylate + adenosine(37) in tRNA = N(6)-L-threonylcarbamoyladenosine(37) in tRNA + AMP + H(+)</text>
        <dbReference type="Rhea" id="RHEA:37059"/>
        <dbReference type="Rhea" id="RHEA-COMP:10162"/>
        <dbReference type="Rhea" id="RHEA-COMP:10163"/>
        <dbReference type="ChEBI" id="CHEBI:15378"/>
        <dbReference type="ChEBI" id="CHEBI:73682"/>
        <dbReference type="ChEBI" id="CHEBI:74411"/>
        <dbReference type="ChEBI" id="CHEBI:74418"/>
        <dbReference type="ChEBI" id="CHEBI:456215"/>
        <dbReference type="EC" id="2.3.1.234"/>
    </reaction>
</comment>
<comment type="cofactor">
    <cofactor evidence="1">
        <name>Fe(2+)</name>
        <dbReference type="ChEBI" id="CHEBI:29033"/>
    </cofactor>
    <text evidence="1">Binds 1 Fe(2+) ion per subunit.</text>
</comment>
<comment type="subcellular location">
    <subcellularLocation>
        <location evidence="1">Cytoplasm</location>
    </subcellularLocation>
</comment>
<comment type="similarity">
    <text evidence="1">Belongs to the KAE1 / TsaD family.</text>
</comment>
<keyword id="KW-0012">Acyltransferase</keyword>
<keyword id="KW-0963">Cytoplasm</keyword>
<keyword id="KW-0408">Iron</keyword>
<keyword id="KW-0479">Metal-binding</keyword>
<keyword id="KW-0808">Transferase</keyword>
<keyword id="KW-0819">tRNA processing</keyword>
<name>TSAD_SALDC</name>
<protein>
    <recommendedName>
        <fullName evidence="1">tRNA N6-adenosine threonylcarbamoyltransferase</fullName>
        <ecNumber evidence="1">2.3.1.234</ecNumber>
    </recommendedName>
    <alternativeName>
        <fullName evidence="1">N6-L-threonylcarbamoyladenine synthase</fullName>
        <shortName evidence="1">t(6)A synthase</shortName>
    </alternativeName>
    <alternativeName>
        <fullName evidence="1">t(6)A37 threonylcarbamoyladenosine biosynthesis protein TsaD</fullName>
    </alternativeName>
    <alternativeName>
        <fullName evidence="1">tRNA threonylcarbamoyladenosine biosynthesis protein TsaD</fullName>
    </alternativeName>
</protein>
<evidence type="ECO:0000255" key="1">
    <source>
        <dbReference type="HAMAP-Rule" id="MF_01445"/>
    </source>
</evidence>
<gene>
    <name evidence="1" type="primary">tsaD</name>
    <name type="synonym">gcp</name>
    <name type="ordered locus">SeD_A3564</name>
</gene>
<proteinExistence type="inferred from homology"/>
<sequence length="337" mass="35940">MRVLGIETSCDETGIAIYDDKKGLLANQLYSQVKLHADYGGVVPELASRDHVRKTVPLIQAALKEAGLTASDIDAVAYTAGPGLVGALLVGATVGRSLAFAWNVPAIPVHHMEGHLLAPMLEDNPPEFPFVALLVSGGHTQLISVTGIGQYELLGESIDDAAGEAFDKTAKLLGLDYPGGPMLSKMASQGTAGRFVFPRPMTDRPGLDFSFSGLKTFAANTIRSNGGDEQTRADIARAFEDAVVDTLMIKCKRALESTGFKRLVMAGGVSANRTLRAKLAEMMQKRRGEVFYARPEFCTDNGAMIAYAGMVRFKAGVTADLGVTVRPRWPLAELPAA</sequence>
<dbReference type="EC" id="2.3.1.234" evidence="1"/>
<dbReference type="EMBL" id="CP001144">
    <property type="protein sequence ID" value="ACH74951.1"/>
    <property type="molecule type" value="Genomic_DNA"/>
</dbReference>
<dbReference type="RefSeq" id="WP_001264394.1">
    <property type="nucleotide sequence ID" value="NC_011205.1"/>
</dbReference>
<dbReference type="SMR" id="B5FHU3"/>
<dbReference type="KEGG" id="sed:SeD_A3564"/>
<dbReference type="HOGENOM" id="CLU_023208_0_0_6"/>
<dbReference type="Proteomes" id="UP000008322">
    <property type="component" value="Chromosome"/>
</dbReference>
<dbReference type="GO" id="GO:0005737">
    <property type="term" value="C:cytoplasm"/>
    <property type="evidence" value="ECO:0007669"/>
    <property type="project" value="UniProtKB-SubCell"/>
</dbReference>
<dbReference type="GO" id="GO:0005506">
    <property type="term" value="F:iron ion binding"/>
    <property type="evidence" value="ECO:0007669"/>
    <property type="project" value="UniProtKB-UniRule"/>
</dbReference>
<dbReference type="GO" id="GO:0061711">
    <property type="term" value="F:N(6)-L-threonylcarbamoyladenine synthase activity"/>
    <property type="evidence" value="ECO:0007669"/>
    <property type="project" value="UniProtKB-EC"/>
</dbReference>
<dbReference type="GO" id="GO:0002949">
    <property type="term" value="P:tRNA threonylcarbamoyladenosine modification"/>
    <property type="evidence" value="ECO:0007669"/>
    <property type="project" value="UniProtKB-UniRule"/>
</dbReference>
<dbReference type="CDD" id="cd24097">
    <property type="entry name" value="ASKHA_NBD_TsaD-like"/>
    <property type="match status" value="1"/>
</dbReference>
<dbReference type="FunFam" id="3.30.420.40:FF:000031">
    <property type="entry name" value="tRNA N6-adenosine threonylcarbamoyltransferase"/>
    <property type="match status" value="1"/>
</dbReference>
<dbReference type="Gene3D" id="3.30.420.40">
    <property type="match status" value="2"/>
</dbReference>
<dbReference type="HAMAP" id="MF_01445">
    <property type="entry name" value="TsaD"/>
    <property type="match status" value="1"/>
</dbReference>
<dbReference type="InterPro" id="IPR043129">
    <property type="entry name" value="ATPase_NBD"/>
</dbReference>
<dbReference type="InterPro" id="IPR000905">
    <property type="entry name" value="Gcp-like_dom"/>
</dbReference>
<dbReference type="InterPro" id="IPR017861">
    <property type="entry name" value="KAE1/TsaD"/>
</dbReference>
<dbReference type="InterPro" id="IPR017860">
    <property type="entry name" value="Peptidase_M22_CS"/>
</dbReference>
<dbReference type="InterPro" id="IPR022450">
    <property type="entry name" value="TsaD"/>
</dbReference>
<dbReference type="NCBIfam" id="TIGR00329">
    <property type="entry name" value="gcp_kae1"/>
    <property type="match status" value="1"/>
</dbReference>
<dbReference type="NCBIfam" id="TIGR03723">
    <property type="entry name" value="T6A_TsaD_YgjD"/>
    <property type="match status" value="1"/>
</dbReference>
<dbReference type="PANTHER" id="PTHR11735">
    <property type="entry name" value="TRNA N6-ADENOSINE THREONYLCARBAMOYLTRANSFERASE"/>
    <property type="match status" value="1"/>
</dbReference>
<dbReference type="PANTHER" id="PTHR11735:SF6">
    <property type="entry name" value="TRNA N6-ADENOSINE THREONYLCARBAMOYLTRANSFERASE, MITOCHONDRIAL"/>
    <property type="match status" value="1"/>
</dbReference>
<dbReference type="Pfam" id="PF00814">
    <property type="entry name" value="TsaD"/>
    <property type="match status" value="1"/>
</dbReference>
<dbReference type="PRINTS" id="PR00789">
    <property type="entry name" value="OSIALOPTASE"/>
</dbReference>
<dbReference type="SUPFAM" id="SSF53067">
    <property type="entry name" value="Actin-like ATPase domain"/>
    <property type="match status" value="1"/>
</dbReference>
<dbReference type="PROSITE" id="PS01016">
    <property type="entry name" value="GLYCOPROTEASE"/>
    <property type="match status" value="1"/>
</dbReference>